<protein>
    <recommendedName>
        <fullName evidence="1">3-dehydroquinate synthase</fullName>
        <shortName evidence="1">DHQS</shortName>
        <ecNumber evidence="1">4.2.3.4</ecNumber>
    </recommendedName>
</protein>
<sequence>MITVNVDLGDRAYPIHIGAGLIGRAELFAPHIKGSSVTVVTNTTVDPLYGDALRAALAPLGKHVSTVVLPDGEAYKNWETLNLIFDGLLGERADRKTTLVALGGGVIGDMTGFAAACYMRGVPFIQVPTTLLSQVDSSVGGKTGINHPLGKNMIGAFYQPQAVIADIGALTTLPERELAAGIAEVIKTGAIADAAFFDWIEANVDALNRRDPAALAHAVKRSCEIKASVVAADEREGGLRAILNFGHTFGHAIEAGLGYGEWLHGEAVGCGMVMAADLSVRLGLLDDASRQRLDAVIAAAHLPTRGPALGDARYMELMRVDKKAEAGAIKFILLKRFGDTLITQAPDEAVFATLAHTTR</sequence>
<reference key="1">
    <citation type="submission" date="2007-10" db="EMBL/GenBank/DDBJ databases">
        <title>Complete sequence of chromosome 1 of Burkholderia multivorans ATCC 17616.</title>
        <authorList>
            <person name="Copeland A."/>
            <person name="Lucas S."/>
            <person name="Lapidus A."/>
            <person name="Barry K."/>
            <person name="Glavina del Rio T."/>
            <person name="Dalin E."/>
            <person name="Tice H."/>
            <person name="Pitluck S."/>
            <person name="Chain P."/>
            <person name="Malfatti S."/>
            <person name="Shin M."/>
            <person name="Vergez L."/>
            <person name="Schmutz J."/>
            <person name="Larimer F."/>
            <person name="Land M."/>
            <person name="Hauser L."/>
            <person name="Kyrpides N."/>
            <person name="Kim E."/>
            <person name="Tiedje J."/>
            <person name="Richardson P."/>
        </authorList>
    </citation>
    <scope>NUCLEOTIDE SEQUENCE [LARGE SCALE GENOMIC DNA]</scope>
    <source>
        <strain>ATCC 17616 / 249</strain>
    </source>
</reference>
<reference key="2">
    <citation type="submission" date="2007-04" db="EMBL/GenBank/DDBJ databases">
        <title>Complete genome sequence of Burkholderia multivorans ATCC 17616.</title>
        <authorList>
            <person name="Ohtsubo Y."/>
            <person name="Yamashita A."/>
            <person name="Kurokawa K."/>
            <person name="Takami H."/>
            <person name="Yuhara S."/>
            <person name="Nishiyama E."/>
            <person name="Endo R."/>
            <person name="Miyazaki R."/>
            <person name="Ono A."/>
            <person name="Yano K."/>
            <person name="Ito M."/>
            <person name="Sota M."/>
            <person name="Yuji N."/>
            <person name="Hattori M."/>
            <person name="Tsuda M."/>
        </authorList>
    </citation>
    <scope>NUCLEOTIDE SEQUENCE [LARGE SCALE GENOMIC DNA]</scope>
    <source>
        <strain>ATCC 17616 / 249</strain>
    </source>
</reference>
<name>AROB_BURM1</name>
<dbReference type="EC" id="4.2.3.4" evidence="1"/>
<dbReference type="EMBL" id="CP000868">
    <property type="protein sequence ID" value="ABX13991.1"/>
    <property type="molecule type" value="Genomic_DNA"/>
</dbReference>
<dbReference type="EMBL" id="AP009385">
    <property type="protein sequence ID" value="BAG44843.1"/>
    <property type="molecule type" value="Genomic_DNA"/>
</dbReference>
<dbReference type="RefSeq" id="WP_012212574.1">
    <property type="nucleotide sequence ID" value="NC_010084.1"/>
</dbReference>
<dbReference type="SMR" id="A9ADP0"/>
<dbReference type="STRING" id="395019.BMULJ_02958"/>
<dbReference type="KEGG" id="bmj:BMULJ_02958"/>
<dbReference type="KEGG" id="bmu:Bmul_0296"/>
<dbReference type="eggNOG" id="COG0337">
    <property type="taxonomic scope" value="Bacteria"/>
</dbReference>
<dbReference type="HOGENOM" id="CLU_001201_0_2_4"/>
<dbReference type="UniPathway" id="UPA00053">
    <property type="reaction ID" value="UER00085"/>
</dbReference>
<dbReference type="Proteomes" id="UP000008815">
    <property type="component" value="Chromosome 1"/>
</dbReference>
<dbReference type="GO" id="GO:0005737">
    <property type="term" value="C:cytoplasm"/>
    <property type="evidence" value="ECO:0007669"/>
    <property type="project" value="UniProtKB-SubCell"/>
</dbReference>
<dbReference type="GO" id="GO:0003856">
    <property type="term" value="F:3-dehydroquinate synthase activity"/>
    <property type="evidence" value="ECO:0007669"/>
    <property type="project" value="UniProtKB-UniRule"/>
</dbReference>
<dbReference type="GO" id="GO:0046872">
    <property type="term" value="F:metal ion binding"/>
    <property type="evidence" value="ECO:0007669"/>
    <property type="project" value="UniProtKB-KW"/>
</dbReference>
<dbReference type="GO" id="GO:0000166">
    <property type="term" value="F:nucleotide binding"/>
    <property type="evidence" value="ECO:0007669"/>
    <property type="project" value="UniProtKB-KW"/>
</dbReference>
<dbReference type="GO" id="GO:0008652">
    <property type="term" value="P:amino acid biosynthetic process"/>
    <property type="evidence" value="ECO:0007669"/>
    <property type="project" value="UniProtKB-KW"/>
</dbReference>
<dbReference type="GO" id="GO:0009073">
    <property type="term" value="P:aromatic amino acid family biosynthetic process"/>
    <property type="evidence" value="ECO:0007669"/>
    <property type="project" value="UniProtKB-KW"/>
</dbReference>
<dbReference type="GO" id="GO:0009423">
    <property type="term" value="P:chorismate biosynthetic process"/>
    <property type="evidence" value="ECO:0007669"/>
    <property type="project" value="UniProtKB-UniRule"/>
</dbReference>
<dbReference type="CDD" id="cd08195">
    <property type="entry name" value="DHQS"/>
    <property type="match status" value="1"/>
</dbReference>
<dbReference type="FunFam" id="3.40.50.1970:FF:000001">
    <property type="entry name" value="3-dehydroquinate synthase"/>
    <property type="match status" value="1"/>
</dbReference>
<dbReference type="Gene3D" id="3.40.50.1970">
    <property type="match status" value="1"/>
</dbReference>
<dbReference type="Gene3D" id="1.20.1090.10">
    <property type="entry name" value="Dehydroquinate synthase-like - alpha domain"/>
    <property type="match status" value="1"/>
</dbReference>
<dbReference type="HAMAP" id="MF_00110">
    <property type="entry name" value="DHQ_synthase"/>
    <property type="match status" value="1"/>
</dbReference>
<dbReference type="InterPro" id="IPR050071">
    <property type="entry name" value="Dehydroquinate_synthase"/>
</dbReference>
<dbReference type="InterPro" id="IPR016037">
    <property type="entry name" value="DHQ_synth_AroB"/>
</dbReference>
<dbReference type="InterPro" id="IPR030963">
    <property type="entry name" value="DHQ_synth_fam"/>
</dbReference>
<dbReference type="InterPro" id="IPR030960">
    <property type="entry name" value="DHQS/DOIS_N"/>
</dbReference>
<dbReference type="InterPro" id="IPR056179">
    <property type="entry name" value="DHQS_C"/>
</dbReference>
<dbReference type="NCBIfam" id="TIGR01357">
    <property type="entry name" value="aroB"/>
    <property type="match status" value="1"/>
</dbReference>
<dbReference type="PANTHER" id="PTHR43622">
    <property type="entry name" value="3-DEHYDROQUINATE SYNTHASE"/>
    <property type="match status" value="1"/>
</dbReference>
<dbReference type="PANTHER" id="PTHR43622:SF7">
    <property type="entry name" value="3-DEHYDROQUINATE SYNTHASE, CHLOROPLASTIC"/>
    <property type="match status" value="1"/>
</dbReference>
<dbReference type="Pfam" id="PF01761">
    <property type="entry name" value="DHQ_synthase"/>
    <property type="match status" value="1"/>
</dbReference>
<dbReference type="Pfam" id="PF24621">
    <property type="entry name" value="DHQS_C"/>
    <property type="match status" value="1"/>
</dbReference>
<dbReference type="PIRSF" id="PIRSF001455">
    <property type="entry name" value="DHQ_synth"/>
    <property type="match status" value="1"/>
</dbReference>
<dbReference type="SUPFAM" id="SSF56796">
    <property type="entry name" value="Dehydroquinate synthase-like"/>
    <property type="match status" value="1"/>
</dbReference>
<gene>
    <name evidence="1" type="primary">aroB</name>
    <name type="ordered locus">Bmul_0296</name>
    <name type="ordered locus">BMULJ_02958</name>
</gene>
<proteinExistence type="inferred from homology"/>
<feature type="chain" id="PRO_1000094474" description="3-dehydroquinate synthase">
    <location>
        <begin position="1"/>
        <end position="359"/>
    </location>
</feature>
<feature type="binding site" evidence="1">
    <location>
        <begin position="71"/>
        <end position="76"/>
    </location>
    <ligand>
        <name>NAD(+)</name>
        <dbReference type="ChEBI" id="CHEBI:57540"/>
    </ligand>
</feature>
<feature type="binding site" evidence="1">
    <location>
        <begin position="105"/>
        <end position="109"/>
    </location>
    <ligand>
        <name>NAD(+)</name>
        <dbReference type="ChEBI" id="CHEBI:57540"/>
    </ligand>
</feature>
<feature type="binding site" evidence="1">
    <location>
        <begin position="129"/>
        <end position="130"/>
    </location>
    <ligand>
        <name>NAD(+)</name>
        <dbReference type="ChEBI" id="CHEBI:57540"/>
    </ligand>
</feature>
<feature type="binding site" evidence="1">
    <location>
        <position position="142"/>
    </location>
    <ligand>
        <name>NAD(+)</name>
        <dbReference type="ChEBI" id="CHEBI:57540"/>
    </ligand>
</feature>
<feature type="binding site" evidence="1">
    <location>
        <position position="151"/>
    </location>
    <ligand>
        <name>NAD(+)</name>
        <dbReference type="ChEBI" id="CHEBI:57540"/>
    </ligand>
</feature>
<feature type="binding site" evidence="1">
    <location>
        <position position="184"/>
    </location>
    <ligand>
        <name>Zn(2+)</name>
        <dbReference type="ChEBI" id="CHEBI:29105"/>
    </ligand>
</feature>
<feature type="binding site" evidence="1">
    <location>
        <position position="247"/>
    </location>
    <ligand>
        <name>Zn(2+)</name>
        <dbReference type="ChEBI" id="CHEBI:29105"/>
    </ligand>
</feature>
<feature type="binding site" evidence="1">
    <location>
        <position position="264"/>
    </location>
    <ligand>
        <name>Zn(2+)</name>
        <dbReference type="ChEBI" id="CHEBI:29105"/>
    </ligand>
</feature>
<keyword id="KW-0028">Amino-acid biosynthesis</keyword>
<keyword id="KW-0057">Aromatic amino acid biosynthesis</keyword>
<keyword id="KW-0170">Cobalt</keyword>
<keyword id="KW-0963">Cytoplasm</keyword>
<keyword id="KW-0456">Lyase</keyword>
<keyword id="KW-0479">Metal-binding</keyword>
<keyword id="KW-0520">NAD</keyword>
<keyword id="KW-0547">Nucleotide-binding</keyword>
<keyword id="KW-1185">Reference proteome</keyword>
<keyword id="KW-0862">Zinc</keyword>
<organism>
    <name type="scientific">Burkholderia multivorans (strain ATCC 17616 / 249)</name>
    <dbReference type="NCBI Taxonomy" id="395019"/>
    <lineage>
        <taxon>Bacteria</taxon>
        <taxon>Pseudomonadati</taxon>
        <taxon>Pseudomonadota</taxon>
        <taxon>Betaproteobacteria</taxon>
        <taxon>Burkholderiales</taxon>
        <taxon>Burkholderiaceae</taxon>
        <taxon>Burkholderia</taxon>
        <taxon>Burkholderia cepacia complex</taxon>
    </lineage>
</organism>
<comment type="function">
    <text evidence="1">Catalyzes the conversion of 3-deoxy-D-arabino-heptulosonate 7-phosphate (DAHP) to dehydroquinate (DHQ).</text>
</comment>
<comment type="catalytic activity">
    <reaction evidence="1">
        <text>7-phospho-2-dehydro-3-deoxy-D-arabino-heptonate = 3-dehydroquinate + phosphate</text>
        <dbReference type="Rhea" id="RHEA:21968"/>
        <dbReference type="ChEBI" id="CHEBI:32364"/>
        <dbReference type="ChEBI" id="CHEBI:43474"/>
        <dbReference type="ChEBI" id="CHEBI:58394"/>
        <dbReference type="EC" id="4.2.3.4"/>
    </reaction>
</comment>
<comment type="cofactor">
    <cofactor evidence="1">
        <name>Co(2+)</name>
        <dbReference type="ChEBI" id="CHEBI:48828"/>
    </cofactor>
    <cofactor evidence="1">
        <name>Zn(2+)</name>
        <dbReference type="ChEBI" id="CHEBI:29105"/>
    </cofactor>
    <text evidence="1">Binds 1 divalent metal cation per subunit. Can use either Co(2+) or Zn(2+).</text>
</comment>
<comment type="cofactor">
    <cofactor evidence="1">
        <name>NAD(+)</name>
        <dbReference type="ChEBI" id="CHEBI:57540"/>
    </cofactor>
</comment>
<comment type="pathway">
    <text evidence="1">Metabolic intermediate biosynthesis; chorismate biosynthesis; chorismate from D-erythrose 4-phosphate and phosphoenolpyruvate: step 2/7.</text>
</comment>
<comment type="subcellular location">
    <subcellularLocation>
        <location evidence="1">Cytoplasm</location>
    </subcellularLocation>
</comment>
<comment type="similarity">
    <text evidence="1">Belongs to the sugar phosphate cyclases superfamily. Dehydroquinate synthase family.</text>
</comment>
<evidence type="ECO:0000255" key="1">
    <source>
        <dbReference type="HAMAP-Rule" id="MF_00110"/>
    </source>
</evidence>
<accession>A9ADP0</accession>